<name>BR1B_PULPI</name>
<evidence type="ECO:0000269" key="1">
    <source>
    </source>
</evidence>
<evidence type="ECO:0000305" key="2"/>
<protein>
    <recommendedName>
        <fullName>Brevinin-1PTb</fullName>
    </recommendedName>
</protein>
<reference key="1">
    <citation type="journal article" date="2008" name="Toxicon">
        <title>Characterization of antimicrobial peptides from the skin secretions of the Malaysian frogs, Odorrana hosii and Hylarana picturata (Anura:Ranidae).</title>
        <authorList>
            <person name="Conlon J.M."/>
            <person name="Kolodziejek J."/>
            <person name="Nowotny N."/>
            <person name="Leprince J."/>
            <person name="Vaudry H."/>
            <person name="Coquet L."/>
            <person name="Jouenne T."/>
            <person name="King J.D."/>
        </authorList>
    </citation>
    <scope>PROTEIN SEQUENCE</scope>
    <scope>FUNCTION</scope>
    <scope>MASS SPECTROMETRY</scope>
    <source>
        <tissue>Skin secretion</tissue>
    </source>
</reference>
<keyword id="KW-0878">Amphibian defense peptide</keyword>
<keyword id="KW-0044">Antibiotic</keyword>
<keyword id="KW-0929">Antimicrobial</keyword>
<keyword id="KW-0903">Direct protein sequencing</keyword>
<keyword id="KW-1015">Disulfide bond</keyword>
<keyword id="KW-0964">Secreted</keyword>
<feature type="peptide" id="PRO_0000366040" description="Brevinin-1PTb">
    <location>
        <begin position="1"/>
        <end position="24"/>
    </location>
</feature>
<feature type="disulfide bond">
    <location>
        <begin position="18"/>
        <end position="24"/>
    </location>
</feature>
<dbReference type="GO" id="GO:0005576">
    <property type="term" value="C:extracellular region"/>
    <property type="evidence" value="ECO:0007669"/>
    <property type="project" value="UniProtKB-SubCell"/>
</dbReference>
<dbReference type="GO" id="GO:0042742">
    <property type="term" value="P:defense response to bacterium"/>
    <property type="evidence" value="ECO:0007669"/>
    <property type="project" value="UniProtKB-KW"/>
</dbReference>
<dbReference type="InterPro" id="IPR012520">
    <property type="entry name" value="Antimicrobial_frog_1"/>
</dbReference>
<dbReference type="Pfam" id="PF08018">
    <property type="entry name" value="Antimicrobial_1"/>
    <property type="match status" value="1"/>
</dbReference>
<organism>
    <name type="scientific">Pulchrana picturata</name>
    <name type="common">Malaysian fire frog</name>
    <name type="synonym">Hylarana picturata</name>
    <dbReference type="NCBI Taxonomy" id="395594"/>
    <lineage>
        <taxon>Eukaryota</taxon>
        <taxon>Metazoa</taxon>
        <taxon>Chordata</taxon>
        <taxon>Craniata</taxon>
        <taxon>Vertebrata</taxon>
        <taxon>Euteleostomi</taxon>
        <taxon>Amphibia</taxon>
        <taxon>Batrachia</taxon>
        <taxon>Anura</taxon>
        <taxon>Neobatrachia</taxon>
        <taxon>Ranoidea</taxon>
        <taxon>Ranidae</taxon>
        <taxon>Pulchrana</taxon>
    </lineage>
</organism>
<proteinExistence type="evidence at protein level"/>
<comment type="function">
    <text evidence="1">Has antibacterial activity against the Gram-positive bacterium S.aureus ATCC 25923 and the Gram-negative bacterium E.coli ATCC 25726.</text>
</comment>
<comment type="subcellular location">
    <subcellularLocation>
        <location>Secreted</location>
    </subcellularLocation>
</comment>
<comment type="tissue specificity">
    <text>Expressed by the skin glands.</text>
</comment>
<comment type="mass spectrometry"/>
<comment type="similarity">
    <text evidence="2">Belongs to the frog skin active peptide (FSAP) family. Brevinin subfamily.</text>
</comment>
<accession>P0C8T2</accession>
<sequence>FMGGLIKAATKALPAAFCAITKKC</sequence>